<proteinExistence type="inferred from homology"/>
<accession>Q16AE5</accession>
<name>RS3_ROSDO</name>
<feature type="chain" id="PRO_0000293872" description="Small ribosomal subunit protein uS3">
    <location>
        <begin position="1"/>
        <end position="235"/>
    </location>
</feature>
<feature type="domain" description="KH type-2" evidence="1">
    <location>
        <begin position="39"/>
        <end position="107"/>
    </location>
</feature>
<feature type="region of interest" description="Disordered" evidence="2">
    <location>
        <begin position="213"/>
        <end position="235"/>
    </location>
</feature>
<gene>
    <name evidence="1" type="primary">rpsC</name>
    <name type="ordered locus">RD1_1408</name>
</gene>
<organism>
    <name type="scientific">Roseobacter denitrificans (strain ATCC 33942 / OCh 114)</name>
    <name type="common">Erythrobacter sp. (strain OCh 114)</name>
    <name type="synonym">Roseobacter denitrificans</name>
    <dbReference type="NCBI Taxonomy" id="375451"/>
    <lineage>
        <taxon>Bacteria</taxon>
        <taxon>Pseudomonadati</taxon>
        <taxon>Pseudomonadota</taxon>
        <taxon>Alphaproteobacteria</taxon>
        <taxon>Rhodobacterales</taxon>
        <taxon>Roseobacteraceae</taxon>
        <taxon>Roseobacter</taxon>
    </lineage>
</organism>
<protein>
    <recommendedName>
        <fullName evidence="1">Small ribosomal subunit protein uS3</fullName>
    </recommendedName>
    <alternativeName>
        <fullName evidence="3">30S ribosomal protein S3</fullName>
    </alternativeName>
</protein>
<dbReference type="EMBL" id="CP000362">
    <property type="protein sequence ID" value="ABG31048.1"/>
    <property type="molecule type" value="Genomic_DNA"/>
</dbReference>
<dbReference type="RefSeq" id="WP_011567668.1">
    <property type="nucleotide sequence ID" value="NC_008209.1"/>
</dbReference>
<dbReference type="SMR" id="Q16AE5"/>
<dbReference type="STRING" id="375451.RD1_1408"/>
<dbReference type="KEGG" id="rde:RD1_1408"/>
<dbReference type="eggNOG" id="COG0092">
    <property type="taxonomic scope" value="Bacteria"/>
</dbReference>
<dbReference type="HOGENOM" id="CLU_058591_0_2_5"/>
<dbReference type="OrthoDB" id="9806396at2"/>
<dbReference type="Proteomes" id="UP000007029">
    <property type="component" value="Chromosome"/>
</dbReference>
<dbReference type="GO" id="GO:0022627">
    <property type="term" value="C:cytosolic small ribosomal subunit"/>
    <property type="evidence" value="ECO:0007669"/>
    <property type="project" value="TreeGrafter"/>
</dbReference>
<dbReference type="GO" id="GO:0003729">
    <property type="term" value="F:mRNA binding"/>
    <property type="evidence" value="ECO:0007669"/>
    <property type="project" value="UniProtKB-UniRule"/>
</dbReference>
<dbReference type="GO" id="GO:0019843">
    <property type="term" value="F:rRNA binding"/>
    <property type="evidence" value="ECO:0007669"/>
    <property type="project" value="UniProtKB-UniRule"/>
</dbReference>
<dbReference type="GO" id="GO:0003735">
    <property type="term" value="F:structural constituent of ribosome"/>
    <property type="evidence" value="ECO:0007669"/>
    <property type="project" value="InterPro"/>
</dbReference>
<dbReference type="GO" id="GO:0006412">
    <property type="term" value="P:translation"/>
    <property type="evidence" value="ECO:0007669"/>
    <property type="project" value="UniProtKB-UniRule"/>
</dbReference>
<dbReference type="CDD" id="cd02412">
    <property type="entry name" value="KH-II_30S_S3"/>
    <property type="match status" value="1"/>
</dbReference>
<dbReference type="FunFam" id="3.30.1140.32:FF:000001">
    <property type="entry name" value="30S ribosomal protein S3"/>
    <property type="match status" value="1"/>
</dbReference>
<dbReference type="FunFam" id="3.30.300.20:FF:000001">
    <property type="entry name" value="30S ribosomal protein S3"/>
    <property type="match status" value="1"/>
</dbReference>
<dbReference type="Gene3D" id="3.30.300.20">
    <property type="match status" value="1"/>
</dbReference>
<dbReference type="Gene3D" id="3.30.1140.32">
    <property type="entry name" value="Ribosomal protein S3, C-terminal domain"/>
    <property type="match status" value="1"/>
</dbReference>
<dbReference type="HAMAP" id="MF_01309_B">
    <property type="entry name" value="Ribosomal_uS3_B"/>
    <property type="match status" value="1"/>
</dbReference>
<dbReference type="InterPro" id="IPR004087">
    <property type="entry name" value="KH_dom"/>
</dbReference>
<dbReference type="InterPro" id="IPR015946">
    <property type="entry name" value="KH_dom-like_a/b"/>
</dbReference>
<dbReference type="InterPro" id="IPR004044">
    <property type="entry name" value="KH_dom_type_2"/>
</dbReference>
<dbReference type="InterPro" id="IPR009019">
    <property type="entry name" value="KH_sf_prok-type"/>
</dbReference>
<dbReference type="InterPro" id="IPR036419">
    <property type="entry name" value="Ribosomal_S3_C_sf"/>
</dbReference>
<dbReference type="InterPro" id="IPR005704">
    <property type="entry name" value="Ribosomal_uS3_bac-typ"/>
</dbReference>
<dbReference type="InterPro" id="IPR001351">
    <property type="entry name" value="Ribosomal_uS3_C"/>
</dbReference>
<dbReference type="InterPro" id="IPR018280">
    <property type="entry name" value="Ribosomal_uS3_CS"/>
</dbReference>
<dbReference type="NCBIfam" id="TIGR01009">
    <property type="entry name" value="rpsC_bact"/>
    <property type="match status" value="1"/>
</dbReference>
<dbReference type="PANTHER" id="PTHR11760">
    <property type="entry name" value="30S/40S RIBOSOMAL PROTEIN S3"/>
    <property type="match status" value="1"/>
</dbReference>
<dbReference type="PANTHER" id="PTHR11760:SF19">
    <property type="entry name" value="SMALL RIBOSOMAL SUBUNIT PROTEIN US3C"/>
    <property type="match status" value="1"/>
</dbReference>
<dbReference type="Pfam" id="PF07650">
    <property type="entry name" value="KH_2"/>
    <property type="match status" value="1"/>
</dbReference>
<dbReference type="Pfam" id="PF00189">
    <property type="entry name" value="Ribosomal_S3_C"/>
    <property type="match status" value="1"/>
</dbReference>
<dbReference type="SMART" id="SM00322">
    <property type="entry name" value="KH"/>
    <property type="match status" value="1"/>
</dbReference>
<dbReference type="SUPFAM" id="SSF54814">
    <property type="entry name" value="Prokaryotic type KH domain (KH-domain type II)"/>
    <property type="match status" value="1"/>
</dbReference>
<dbReference type="SUPFAM" id="SSF54821">
    <property type="entry name" value="Ribosomal protein S3 C-terminal domain"/>
    <property type="match status" value="1"/>
</dbReference>
<dbReference type="PROSITE" id="PS50823">
    <property type="entry name" value="KH_TYPE_2"/>
    <property type="match status" value="1"/>
</dbReference>
<dbReference type="PROSITE" id="PS00548">
    <property type="entry name" value="RIBOSOMAL_S3"/>
    <property type="match status" value="1"/>
</dbReference>
<sequence length="235" mass="26358">MGNKVNPIGMRLQVNRTWDSRWYADTKDYGDLLLEDLAIRDFIKKECHQAGVARVIIERPHKKCRVTIHTARPGVIIGKKGADIEGLRQKIAKMTASELHLNIVEVRKPELDAALVGESIAQQLERRVSFRRAMKRAVQNAMRMGALGIRVNVAGRLGGAEIARTEWYREGRVPLHTLRADIDYAHVEAATAYGIIGIKTWIFKGEIMEHDPAARDRKAQELQDGPAPRGAGGRR</sequence>
<reference key="1">
    <citation type="journal article" date="2007" name="J. Bacteriol.">
        <title>The complete genome sequence of Roseobacter denitrificans reveals a mixotrophic rather than photosynthetic metabolism.</title>
        <authorList>
            <person name="Swingley W.D."/>
            <person name="Sadekar S."/>
            <person name="Mastrian S.D."/>
            <person name="Matthies H.J."/>
            <person name="Hao J."/>
            <person name="Ramos H."/>
            <person name="Acharya C.R."/>
            <person name="Conrad A.L."/>
            <person name="Taylor H.L."/>
            <person name="Dejesa L.C."/>
            <person name="Shah M.K."/>
            <person name="O'Huallachain M.E."/>
            <person name="Lince M.T."/>
            <person name="Blankenship R.E."/>
            <person name="Beatty J.T."/>
            <person name="Touchman J.W."/>
        </authorList>
    </citation>
    <scope>NUCLEOTIDE SEQUENCE [LARGE SCALE GENOMIC DNA]</scope>
    <source>
        <strain>ATCC 33942 / OCh 114</strain>
    </source>
</reference>
<evidence type="ECO:0000255" key="1">
    <source>
        <dbReference type="HAMAP-Rule" id="MF_01309"/>
    </source>
</evidence>
<evidence type="ECO:0000256" key="2">
    <source>
        <dbReference type="SAM" id="MobiDB-lite"/>
    </source>
</evidence>
<evidence type="ECO:0000305" key="3"/>
<comment type="function">
    <text evidence="1">Binds the lower part of the 30S subunit head. Binds mRNA in the 70S ribosome, positioning it for translation.</text>
</comment>
<comment type="subunit">
    <text evidence="1">Part of the 30S ribosomal subunit. Forms a tight complex with proteins S10 and S14.</text>
</comment>
<comment type="similarity">
    <text evidence="1">Belongs to the universal ribosomal protein uS3 family.</text>
</comment>
<keyword id="KW-1185">Reference proteome</keyword>
<keyword id="KW-0687">Ribonucleoprotein</keyword>
<keyword id="KW-0689">Ribosomal protein</keyword>
<keyword id="KW-0694">RNA-binding</keyword>
<keyword id="KW-0699">rRNA-binding</keyword>